<gene>
    <name evidence="1" type="primary">glk</name>
    <name type="ordered locus">Xfasm12_0373</name>
</gene>
<evidence type="ECO:0000255" key="1">
    <source>
        <dbReference type="HAMAP-Rule" id="MF_00524"/>
    </source>
</evidence>
<accession>B0U1J8</accession>
<name>GLK_XYLFM</name>
<sequence length="337" mass="36239">MNAPQAPVLVADIGGTNARFALANPTLTSAPLLNDSMREFAVIEFPSLGEAAQHYLHHIGIHTTKGVFAIAGHVDGDEARITNHPWVITRTRTATMLGFDTLHLINDFVAQAMAISVLGPQDVIQIGSAKWEQFPLSAATRNYGIIGPGTGLGVGGLVIRNGRCYPLETEGGHVSFPPSTPEEIRILEILSQQFGRVSNERLISGPGIVNIHRALSEIDGIDPGPLRPQDITMRAADGDIRATRTINLFCNIFGAITGDLVLIQGAWDGVFLTGGLVPKLLNSIQHSGFRQRFEHKGRFSAIMARIPSLAVIHPHPGLLGAAVYARDTEQVPQEIKA</sequence>
<proteinExistence type="inferred from homology"/>
<reference key="1">
    <citation type="journal article" date="2010" name="J. Bacteriol.">
        <title>Whole genome sequences of two Xylella fastidiosa strains (M12 and M23) causing almond leaf scorch disease in California.</title>
        <authorList>
            <person name="Chen J."/>
            <person name="Xie G."/>
            <person name="Han S."/>
            <person name="Chertkov O."/>
            <person name="Sims D."/>
            <person name="Civerolo E.L."/>
        </authorList>
    </citation>
    <scope>NUCLEOTIDE SEQUENCE [LARGE SCALE GENOMIC DNA]</scope>
    <source>
        <strain>M12</strain>
    </source>
</reference>
<organism>
    <name type="scientific">Xylella fastidiosa (strain M12)</name>
    <dbReference type="NCBI Taxonomy" id="405440"/>
    <lineage>
        <taxon>Bacteria</taxon>
        <taxon>Pseudomonadati</taxon>
        <taxon>Pseudomonadota</taxon>
        <taxon>Gammaproteobacteria</taxon>
        <taxon>Lysobacterales</taxon>
        <taxon>Lysobacteraceae</taxon>
        <taxon>Xylella</taxon>
    </lineage>
</organism>
<feature type="chain" id="PRO_1000127730" description="Glucokinase">
    <location>
        <begin position="1"/>
        <end position="337"/>
    </location>
</feature>
<feature type="binding site" evidence="1">
    <location>
        <begin position="11"/>
        <end position="16"/>
    </location>
    <ligand>
        <name>ATP</name>
        <dbReference type="ChEBI" id="CHEBI:30616"/>
    </ligand>
</feature>
<comment type="catalytic activity">
    <reaction evidence="1">
        <text>D-glucose + ATP = D-glucose 6-phosphate + ADP + H(+)</text>
        <dbReference type="Rhea" id="RHEA:17825"/>
        <dbReference type="ChEBI" id="CHEBI:4167"/>
        <dbReference type="ChEBI" id="CHEBI:15378"/>
        <dbReference type="ChEBI" id="CHEBI:30616"/>
        <dbReference type="ChEBI" id="CHEBI:61548"/>
        <dbReference type="ChEBI" id="CHEBI:456216"/>
        <dbReference type="EC" id="2.7.1.2"/>
    </reaction>
</comment>
<comment type="subcellular location">
    <subcellularLocation>
        <location evidence="1">Cytoplasm</location>
    </subcellularLocation>
</comment>
<comment type="similarity">
    <text evidence="1">Belongs to the bacterial glucokinase family.</text>
</comment>
<dbReference type="EC" id="2.7.1.2" evidence="1"/>
<dbReference type="EMBL" id="CP000941">
    <property type="protein sequence ID" value="ACA11387.1"/>
    <property type="molecule type" value="Genomic_DNA"/>
</dbReference>
<dbReference type="RefSeq" id="WP_004085201.1">
    <property type="nucleotide sequence ID" value="NC_010513.1"/>
</dbReference>
<dbReference type="SMR" id="B0U1J8"/>
<dbReference type="KEGG" id="xfm:Xfasm12_0373"/>
<dbReference type="HOGENOM" id="CLU_042582_1_0_6"/>
<dbReference type="GO" id="GO:0005829">
    <property type="term" value="C:cytosol"/>
    <property type="evidence" value="ECO:0007669"/>
    <property type="project" value="TreeGrafter"/>
</dbReference>
<dbReference type="GO" id="GO:0005524">
    <property type="term" value="F:ATP binding"/>
    <property type="evidence" value="ECO:0007669"/>
    <property type="project" value="UniProtKB-UniRule"/>
</dbReference>
<dbReference type="GO" id="GO:0005536">
    <property type="term" value="F:D-glucose binding"/>
    <property type="evidence" value="ECO:0007669"/>
    <property type="project" value="InterPro"/>
</dbReference>
<dbReference type="GO" id="GO:0004340">
    <property type="term" value="F:glucokinase activity"/>
    <property type="evidence" value="ECO:0007669"/>
    <property type="project" value="UniProtKB-UniRule"/>
</dbReference>
<dbReference type="GO" id="GO:0006096">
    <property type="term" value="P:glycolytic process"/>
    <property type="evidence" value="ECO:0007669"/>
    <property type="project" value="UniProtKB-UniRule"/>
</dbReference>
<dbReference type="CDD" id="cd24008">
    <property type="entry name" value="ASKHA_NBD_GLK"/>
    <property type="match status" value="1"/>
</dbReference>
<dbReference type="Gene3D" id="3.30.420.40">
    <property type="match status" value="1"/>
</dbReference>
<dbReference type="Gene3D" id="3.40.367.20">
    <property type="match status" value="1"/>
</dbReference>
<dbReference type="HAMAP" id="MF_00524">
    <property type="entry name" value="Glucokinase"/>
    <property type="match status" value="1"/>
</dbReference>
<dbReference type="InterPro" id="IPR043129">
    <property type="entry name" value="ATPase_NBD"/>
</dbReference>
<dbReference type="InterPro" id="IPR050201">
    <property type="entry name" value="Bacterial_glucokinase"/>
</dbReference>
<dbReference type="InterPro" id="IPR003836">
    <property type="entry name" value="Glucokinase"/>
</dbReference>
<dbReference type="NCBIfam" id="TIGR00749">
    <property type="entry name" value="glk"/>
    <property type="match status" value="1"/>
</dbReference>
<dbReference type="PANTHER" id="PTHR47690">
    <property type="entry name" value="GLUCOKINASE"/>
    <property type="match status" value="1"/>
</dbReference>
<dbReference type="PANTHER" id="PTHR47690:SF1">
    <property type="entry name" value="GLUCOKINASE"/>
    <property type="match status" value="1"/>
</dbReference>
<dbReference type="Pfam" id="PF02685">
    <property type="entry name" value="Glucokinase"/>
    <property type="match status" value="1"/>
</dbReference>
<dbReference type="SUPFAM" id="SSF53067">
    <property type="entry name" value="Actin-like ATPase domain"/>
    <property type="match status" value="1"/>
</dbReference>
<keyword id="KW-0067">ATP-binding</keyword>
<keyword id="KW-0963">Cytoplasm</keyword>
<keyword id="KW-0324">Glycolysis</keyword>
<keyword id="KW-0418">Kinase</keyword>
<keyword id="KW-0547">Nucleotide-binding</keyword>
<keyword id="KW-0808">Transferase</keyword>
<protein>
    <recommendedName>
        <fullName evidence="1">Glucokinase</fullName>
        <ecNumber evidence="1">2.7.1.2</ecNumber>
    </recommendedName>
    <alternativeName>
        <fullName evidence="1">Glucose kinase</fullName>
    </alternativeName>
</protein>